<organism>
    <name type="scientific">Escherichia coli (strain K12)</name>
    <dbReference type="NCBI Taxonomy" id="83333"/>
    <lineage>
        <taxon>Bacteria</taxon>
        <taxon>Pseudomonadati</taxon>
        <taxon>Pseudomonadota</taxon>
        <taxon>Gammaproteobacteria</taxon>
        <taxon>Enterobacterales</taxon>
        <taxon>Enterobacteriaceae</taxon>
        <taxon>Escherichia</taxon>
    </lineage>
</organism>
<sequence length="293" mass="32694">MKMRKGIILAGGSGTRLYPVTMAVSKQLLPIYDKPMIYYPLSTLMLAGIRDILIISTPQDTPRFQQLLGDGSQWGLNLQYKVQPSPDGLAQAFIIGEEFIGGDDCALVLGDNIFYGHDLPKLMEAAVNKESGATVFAYHVNDPERYGVVEFDKNGTAISLEEKPLEPKSNYAVTGLYFYDNDVVQMAKNLKPSARGELEITDINRIYLEQGRLSVAMMGRGYAWLDTGTHQSLIEASNFIATIEERQGLKVSCPEEIAFRKGFIDVEQVRKLAVPLIKNNYGQYLYKMTKDSN</sequence>
<reference key="1">
    <citation type="journal article" date="1994" name="J. Bacteriol.">
        <title>Structure of the O antigen of Escherichia coli K-12 and the sequence of its rfb gene cluster.</title>
        <authorList>
            <person name="Stevenson G."/>
            <person name="Neal B."/>
            <person name="Liu D."/>
            <person name="Hobbs M."/>
            <person name="Packer N.H."/>
            <person name="Batley M."/>
            <person name="Redmond J.W."/>
            <person name="Lindquist L."/>
            <person name="Reeves P.R."/>
        </authorList>
    </citation>
    <scope>NUCLEOTIDE SEQUENCE [GENOMIC DNA]</scope>
    <source>
        <strain>K12 / WG1</strain>
    </source>
</reference>
<reference key="2">
    <citation type="submission" date="1997-12" db="EMBL/GenBank/DDBJ databases">
        <authorList>
            <person name="Stevenson G."/>
        </authorList>
    </citation>
    <scope>SEQUENCE REVISION TO 288</scope>
</reference>
<reference key="3">
    <citation type="journal article" date="1996" name="DNA Res.">
        <title>A 460-kb DNA sequence of the Escherichia coli K-12 genome corresponding to the 40.1-50.0 min region on the linkage map.</title>
        <authorList>
            <person name="Itoh T."/>
            <person name="Aiba H."/>
            <person name="Baba T."/>
            <person name="Fujita K."/>
            <person name="Hayashi K."/>
            <person name="Inada T."/>
            <person name="Isono K."/>
            <person name="Kasai H."/>
            <person name="Kimura S."/>
            <person name="Kitakawa M."/>
            <person name="Kitagawa M."/>
            <person name="Makino K."/>
            <person name="Miki T."/>
            <person name="Mizobuchi K."/>
            <person name="Mori H."/>
            <person name="Mori T."/>
            <person name="Motomura K."/>
            <person name="Nakade S."/>
            <person name="Nakamura Y."/>
            <person name="Nashimoto H."/>
            <person name="Nishio Y."/>
            <person name="Oshima T."/>
            <person name="Saito N."/>
            <person name="Sampei G."/>
            <person name="Seki Y."/>
            <person name="Sivasundaram S."/>
            <person name="Tagami H."/>
            <person name="Takeda J."/>
            <person name="Takemoto K."/>
            <person name="Wada C."/>
            <person name="Yamamoto Y."/>
            <person name="Horiuchi T."/>
        </authorList>
    </citation>
    <scope>NUCLEOTIDE SEQUENCE [LARGE SCALE GENOMIC DNA]</scope>
    <source>
        <strain>K12 / W3110 / ATCC 27325 / DSM 5911</strain>
    </source>
</reference>
<reference key="4">
    <citation type="journal article" date="1997" name="Science">
        <title>The complete genome sequence of Escherichia coli K-12.</title>
        <authorList>
            <person name="Blattner F.R."/>
            <person name="Plunkett G. III"/>
            <person name="Bloch C.A."/>
            <person name="Perna N.T."/>
            <person name="Burland V."/>
            <person name="Riley M."/>
            <person name="Collado-Vides J."/>
            <person name="Glasner J.D."/>
            <person name="Rode C.K."/>
            <person name="Mayhew G.F."/>
            <person name="Gregor J."/>
            <person name="Davis N.W."/>
            <person name="Kirkpatrick H.A."/>
            <person name="Goeden M.A."/>
            <person name="Rose D.J."/>
            <person name="Mau B."/>
            <person name="Shao Y."/>
        </authorList>
    </citation>
    <scope>NUCLEOTIDE SEQUENCE [LARGE SCALE GENOMIC DNA]</scope>
    <source>
        <strain>K12 / MG1655 / ATCC 47076</strain>
    </source>
</reference>
<reference key="5">
    <citation type="journal article" date="2006" name="Mol. Syst. Biol.">
        <title>Highly accurate genome sequences of Escherichia coli K-12 strains MG1655 and W3110.</title>
        <authorList>
            <person name="Hayashi K."/>
            <person name="Morooka N."/>
            <person name="Yamamoto Y."/>
            <person name="Fujita K."/>
            <person name="Isono K."/>
            <person name="Choi S."/>
            <person name="Ohtsubo E."/>
            <person name="Baba T."/>
            <person name="Wanner B.L."/>
            <person name="Mori H."/>
            <person name="Horiuchi T."/>
        </authorList>
    </citation>
    <scope>NUCLEOTIDE SEQUENCE [LARGE SCALE GENOMIC DNA]</scope>
    <source>
        <strain>K12 / W3110 / ATCC 27325 / DSM 5911</strain>
    </source>
</reference>
<reference key="6">
    <citation type="journal article" date="1994" name="J. Bacteriol.">
        <title>Genetic analysis of the O-specific lipopolysaccharide biosynthesis region (rfb) of Escherichia coli K-12 W3110: identification of genes that confer group 6 specificity to Shigella flexneri serotypes Y and 4a.</title>
        <authorList>
            <person name="Yao Z."/>
            <person name="Valvano M.A."/>
        </authorList>
    </citation>
    <scope>NUCLEOTIDE SEQUENCE [GENOMIC DNA] OF 247-293</scope>
    <source>
        <strain>K12 / W3110 / ATCC 27325 / DSM 5911</strain>
    </source>
</reference>
<reference key="7">
    <citation type="journal article" date="2001" name="J. Mol. Biol.">
        <title>Kinetic and crystallographic analyses support a sequential-ordered bi bi catalytic mechanism for Escherichia coli glucose-1-phosphate thymidylyltransferase.</title>
        <authorList>
            <person name="Zuccotti S."/>
            <person name="Zanardi D."/>
            <person name="Rosano C."/>
            <person name="Sturla L."/>
            <person name="Tonetti M."/>
            <person name="Bolognesi M."/>
        </authorList>
    </citation>
    <scope>FUNCTION</scope>
    <scope>CATALYTIC ACTIVITY</scope>
    <scope>COFACTOR</scope>
    <scope>BIOPHYSICOCHEMICAL PROPERTIES</scope>
    <scope>PATHWAY</scope>
    <scope>SUBUNIT</scope>
    <scope>X-RAY CRYSTALLOGRAPHY (1.9 ANGSTROMS) OF COMPLEXES WITH DTDP-G; DTMP AND G1P AND DEOXYTHYMIDINE AND G1P</scope>
    <source>
        <strain>K12</strain>
    </source>
</reference>
<name>RMLA1_ECOLI</name>
<accession>P37744</accession>
<accession>P78081</accession>
<feature type="chain" id="PRO_0000207991" description="Glucose-1-phosphate thymidylyltransferase 1">
    <location>
        <begin position="1"/>
        <end position="293"/>
    </location>
</feature>
<feature type="binding site" evidence="1">
    <location>
        <position position="111"/>
    </location>
    <ligand>
        <name>Mg(2+)</name>
        <dbReference type="ChEBI" id="CHEBI:18420"/>
    </ligand>
</feature>
<feature type="binding site" evidence="1">
    <location>
        <position position="226"/>
    </location>
    <ligand>
        <name>Mg(2+)</name>
        <dbReference type="ChEBI" id="CHEBI:18420"/>
    </ligand>
</feature>
<feature type="sequence conflict" description="In Ref. 6; AAC31629." evidence="3" ref="6">
    <original>Q</original>
    <variation>P</variation>
    <location>
        <position position="247"/>
    </location>
</feature>
<feature type="strand" evidence="4">
    <location>
        <begin position="4"/>
        <end position="9"/>
    </location>
</feature>
<feature type="helix" evidence="4">
    <location>
        <begin position="15"/>
        <end position="17"/>
    </location>
</feature>
<feature type="turn" evidence="4">
    <location>
        <begin position="18"/>
        <end position="22"/>
    </location>
</feature>
<feature type="helix" evidence="4">
    <location>
        <begin position="26"/>
        <end position="28"/>
    </location>
</feature>
<feature type="strand" evidence="4">
    <location>
        <begin position="29"/>
        <end position="31"/>
    </location>
</feature>
<feature type="helix" evidence="4">
    <location>
        <begin position="38"/>
        <end position="46"/>
    </location>
</feature>
<feature type="strand" evidence="4">
    <location>
        <begin position="49"/>
        <end position="56"/>
    </location>
</feature>
<feature type="turn" evidence="4">
    <location>
        <begin position="58"/>
        <end position="60"/>
    </location>
</feature>
<feature type="helix" evidence="4">
    <location>
        <begin position="61"/>
        <end position="68"/>
    </location>
</feature>
<feature type="helix" evidence="4">
    <location>
        <begin position="72"/>
        <end position="74"/>
    </location>
</feature>
<feature type="strand" evidence="4">
    <location>
        <begin position="77"/>
        <end position="82"/>
    </location>
</feature>
<feature type="helix" evidence="4">
    <location>
        <begin position="91"/>
        <end position="95"/>
    </location>
</feature>
<feature type="helix" evidence="4">
    <location>
        <begin position="97"/>
        <end position="100"/>
    </location>
</feature>
<feature type="strand" evidence="4">
    <location>
        <begin position="105"/>
        <end position="109"/>
    </location>
</feature>
<feature type="strand" evidence="4">
    <location>
        <begin position="113"/>
        <end position="115"/>
    </location>
</feature>
<feature type="helix" evidence="4">
    <location>
        <begin position="119"/>
        <end position="128"/>
    </location>
</feature>
<feature type="strand" evidence="4">
    <location>
        <begin position="131"/>
        <end position="139"/>
    </location>
</feature>
<feature type="helix" evidence="4">
    <location>
        <begin position="143"/>
        <end position="145"/>
    </location>
</feature>
<feature type="strand" evidence="4">
    <location>
        <begin position="146"/>
        <end position="151"/>
    </location>
</feature>
<feature type="strand" evidence="5">
    <location>
        <begin position="153"/>
        <end position="155"/>
    </location>
</feature>
<feature type="strand" evidence="4">
    <location>
        <begin position="157"/>
        <end position="163"/>
    </location>
</feature>
<feature type="strand" evidence="4">
    <location>
        <begin position="170"/>
        <end position="179"/>
    </location>
</feature>
<feature type="helix" evidence="4">
    <location>
        <begin position="183"/>
        <end position="189"/>
    </location>
</feature>
<feature type="strand" evidence="5">
    <location>
        <begin position="194"/>
        <end position="197"/>
    </location>
</feature>
<feature type="helix" evidence="4">
    <location>
        <begin position="200"/>
        <end position="209"/>
    </location>
</feature>
<feature type="strand" evidence="4">
    <location>
        <begin position="213"/>
        <end position="217"/>
    </location>
</feature>
<feature type="strand" evidence="4">
    <location>
        <begin position="222"/>
        <end position="225"/>
    </location>
</feature>
<feature type="helix" evidence="4">
    <location>
        <begin position="230"/>
        <end position="247"/>
    </location>
</feature>
<feature type="helix" evidence="4">
    <location>
        <begin position="254"/>
        <end position="260"/>
    </location>
</feature>
<feature type="helix" evidence="4">
    <location>
        <begin position="266"/>
        <end position="273"/>
    </location>
</feature>
<feature type="helix" evidence="4">
    <location>
        <begin position="274"/>
        <end position="276"/>
    </location>
</feature>
<feature type="helix" evidence="4">
    <location>
        <begin position="280"/>
        <end position="288"/>
    </location>
</feature>
<keyword id="KW-0002">3D-structure</keyword>
<keyword id="KW-0448">Lipopolysaccharide biosynthesis</keyword>
<keyword id="KW-0460">Magnesium</keyword>
<keyword id="KW-0479">Metal-binding</keyword>
<keyword id="KW-0548">Nucleotidyltransferase</keyword>
<keyword id="KW-1185">Reference proteome</keyword>
<keyword id="KW-0808">Transferase</keyword>
<proteinExistence type="evidence at protein level"/>
<comment type="function">
    <text evidence="2">Catalyzes the formation of dTDP-glucose, from dTTP and glucose 1-phosphate, as well as its pyrophosphorolysis.</text>
</comment>
<comment type="catalytic activity">
    <reaction evidence="2">
        <text>dTTP + alpha-D-glucose 1-phosphate + H(+) = dTDP-alpha-D-glucose + diphosphate</text>
        <dbReference type="Rhea" id="RHEA:15225"/>
        <dbReference type="ChEBI" id="CHEBI:15378"/>
        <dbReference type="ChEBI" id="CHEBI:33019"/>
        <dbReference type="ChEBI" id="CHEBI:37568"/>
        <dbReference type="ChEBI" id="CHEBI:57477"/>
        <dbReference type="ChEBI" id="CHEBI:58601"/>
        <dbReference type="EC" id="2.7.7.24"/>
    </reaction>
</comment>
<comment type="cofactor">
    <cofactor evidence="2">
        <name>Mg(2+)</name>
        <dbReference type="ChEBI" id="CHEBI:18420"/>
    </cofactor>
    <text evidence="2">Binds 1 Mg(2+) ion per subunit.</text>
</comment>
<comment type="biophysicochemical properties">
    <kinetics>
        <KM evidence="2">20.5 uM for dTTP</KM>
        <KM evidence="2">34 uM for glucose 1-phosphate</KM>
        <KM evidence="2">95 uM for dTDP-glucose</KM>
        <KM evidence="2">154 uM for PPi</KM>
        <Vmax evidence="2">194.0 umol/min/mg enzyme for the forward reaction</Vmax>
        <Vmax evidence="2">360.0 umol/min/mg enzyme for the reverse reaction</Vmax>
    </kinetics>
    <phDependence>
        <text evidence="2">Optimum pH is 8.0-8.5. Active from pH 6.0 to 10.0.</text>
    </phDependence>
</comment>
<comment type="pathway">
    <text evidence="2">Carbohydrate biosynthesis; dTDP-L-rhamnose biosynthesis.</text>
</comment>
<comment type="pathway">
    <text evidence="2">Bacterial outer membrane biogenesis; LPS O-antigen biosynthesis.</text>
</comment>
<comment type="subunit">
    <text evidence="2">Homotetramer.</text>
</comment>
<comment type="miscellaneous">
    <text evidence="2">Both catalyzed reactions, i.e. dTDP-glucose biosynthesis and pyrophosphorolysis, follow a sequential ordered bi-bi catalytic mechanism.</text>
</comment>
<comment type="similarity">
    <text evidence="3">Belongs to the glucose-1-phosphate thymidylyltransferase family.</text>
</comment>
<comment type="caution">
    <text evidence="3">Most extant K-12 lines do not express O-antigen because of mutations in dTDP-rhamnose biosynthetic genes or in the rhamnosyltransferase gene wbbL.</text>
</comment>
<protein>
    <recommendedName>
        <fullName>Glucose-1-phosphate thymidylyltransferase 1</fullName>
        <shortName>G1P-TT 1</shortName>
        <ecNumber evidence="2">2.7.7.24</ecNumber>
    </recommendedName>
    <alternativeName>
        <fullName>dTDP-glucose pyrophosphorylase 1</fullName>
    </alternativeName>
    <alternativeName>
        <fullName>dTDP-glucose synthase 1</fullName>
    </alternativeName>
</protein>
<evidence type="ECO:0000250" key="1">
    <source>
        <dbReference type="UniProtKB" id="P61887"/>
    </source>
</evidence>
<evidence type="ECO:0000269" key="2">
    <source>
    </source>
</evidence>
<evidence type="ECO:0000305" key="3"/>
<evidence type="ECO:0007829" key="4">
    <source>
        <dbReference type="PDB" id="1H5R"/>
    </source>
</evidence>
<evidence type="ECO:0007829" key="5">
    <source>
        <dbReference type="PDB" id="1H5S"/>
    </source>
</evidence>
<gene>
    <name type="primary">rfbA</name>
    <name type="synonym">rmlA</name>
    <name type="synonym">rmlA1</name>
    <name type="ordered locus">b2039</name>
    <name type="ordered locus">JW2024</name>
</gene>
<dbReference type="EC" id="2.7.7.24" evidence="2"/>
<dbReference type="EMBL" id="U09876">
    <property type="protein sequence ID" value="AAB88400.1"/>
    <property type="molecule type" value="Genomic_DNA"/>
</dbReference>
<dbReference type="EMBL" id="U00096">
    <property type="protein sequence ID" value="AAC75100.1"/>
    <property type="molecule type" value="Genomic_DNA"/>
</dbReference>
<dbReference type="EMBL" id="AP009048">
    <property type="protein sequence ID" value="BAA15881.1"/>
    <property type="molecule type" value="Genomic_DNA"/>
</dbReference>
<dbReference type="EMBL" id="U03041">
    <property type="protein sequence ID" value="AAC31629.1"/>
    <property type="molecule type" value="Genomic_DNA"/>
</dbReference>
<dbReference type="PIR" id="F64969">
    <property type="entry name" value="F64969"/>
</dbReference>
<dbReference type="RefSeq" id="NP_416543.1">
    <property type="nucleotide sequence ID" value="NC_000913.3"/>
</dbReference>
<dbReference type="RefSeq" id="WP_000783975.1">
    <property type="nucleotide sequence ID" value="NZ_LN832404.1"/>
</dbReference>
<dbReference type="PDB" id="1H5R">
    <property type="method" value="X-ray"/>
    <property type="resolution" value="1.90 A"/>
    <property type="chains" value="A/B/C/D=1-293"/>
</dbReference>
<dbReference type="PDB" id="1H5S">
    <property type="method" value="X-ray"/>
    <property type="resolution" value="2.30 A"/>
    <property type="chains" value="A/B/C/D=1-293"/>
</dbReference>
<dbReference type="PDB" id="1H5T">
    <property type="method" value="X-ray"/>
    <property type="resolution" value="1.90 A"/>
    <property type="chains" value="A/B/C/D=1-293"/>
</dbReference>
<dbReference type="PDBsum" id="1H5R"/>
<dbReference type="PDBsum" id="1H5S"/>
<dbReference type="PDBsum" id="1H5T"/>
<dbReference type="SMR" id="P37744"/>
<dbReference type="BioGRID" id="4259680">
    <property type="interactions" value="199"/>
</dbReference>
<dbReference type="FunCoup" id="P37744">
    <property type="interactions" value="703"/>
</dbReference>
<dbReference type="IntAct" id="P37744">
    <property type="interactions" value="9"/>
</dbReference>
<dbReference type="STRING" id="511145.b2039"/>
<dbReference type="jPOST" id="P37744"/>
<dbReference type="PaxDb" id="511145-b2039"/>
<dbReference type="EnsemblBacteria" id="AAC75100">
    <property type="protein sequence ID" value="AAC75100"/>
    <property type="gene ID" value="b2039"/>
</dbReference>
<dbReference type="GeneID" id="945154"/>
<dbReference type="KEGG" id="ecj:JW2024"/>
<dbReference type="KEGG" id="eco:b2039"/>
<dbReference type="KEGG" id="ecoc:C3026_11485"/>
<dbReference type="PATRIC" id="fig|1411691.4.peg.212"/>
<dbReference type="EchoBASE" id="EB1921"/>
<dbReference type="eggNOG" id="COG1209">
    <property type="taxonomic scope" value="Bacteria"/>
</dbReference>
<dbReference type="HOGENOM" id="CLU_029499_9_0_6"/>
<dbReference type="InParanoid" id="P37744"/>
<dbReference type="OMA" id="PFIMYLG"/>
<dbReference type="OrthoDB" id="9803871at2"/>
<dbReference type="PhylomeDB" id="P37744"/>
<dbReference type="BioCyc" id="EcoCyc:DTDPGLUCOSEPP-MONOMER"/>
<dbReference type="BioCyc" id="MetaCyc:DTDPGLUCOSEPP-MONOMER"/>
<dbReference type="UniPathway" id="UPA00124"/>
<dbReference type="UniPathway" id="UPA00281"/>
<dbReference type="EvolutionaryTrace" id="P37744"/>
<dbReference type="PRO" id="PR:P37744"/>
<dbReference type="Proteomes" id="UP000000625">
    <property type="component" value="Chromosome"/>
</dbReference>
<dbReference type="GO" id="GO:0005829">
    <property type="term" value="C:cytosol"/>
    <property type="evidence" value="ECO:0000314"/>
    <property type="project" value="EcoCyc"/>
</dbReference>
<dbReference type="GO" id="GO:0008879">
    <property type="term" value="F:glucose-1-phosphate thymidylyltransferase activity"/>
    <property type="evidence" value="ECO:0000314"/>
    <property type="project" value="EcoCyc"/>
</dbReference>
<dbReference type="GO" id="GO:0042802">
    <property type="term" value="F:identical protein binding"/>
    <property type="evidence" value="ECO:0000314"/>
    <property type="project" value="EcoCyc"/>
</dbReference>
<dbReference type="GO" id="GO:0046872">
    <property type="term" value="F:metal ion binding"/>
    <property type="evidence" value="ECO:0000314"/>
    <property type="project" value="EcoCyc"/>
</dbReference>
<dbReference type="GO" id="GO:0019305">
    <property type="term" value="P:dTDP-rhamnose biosynthetic process"/>
    <property type="evidence" value="ECO:0007669"/>
    <property type="project" value="UniProtKB-UniPathway"/>
</dbReference>
<dbReference type="GO" id="GO:0009243">
    <property type="term" value="P:O antigen biosynthetic process"/>
    <property type="evidence" value="ECO:0007669"/>
    <property type="project" value="UniProtKB-UniPathway"/>
</dbReference>
<dbReference type="GO" id="GO:0051289">
    <property type="term" value="P:protein homotetramerization"/>
    <property type="evidence" value="ECO:0000314"/>
    <property type="project" value="EcoCyc"/>
</dbReference>
<dbReference type="CDD" id="cd02538">
    <property type="entry name" value="G1P_TT_short"/>
    <property type="match status" value="1"/>
</dbReference>
<dbReference type="FunFam" id="3.90.550.10:FF:000023">
    <property type="entry name" value="Glucose-1-phosphate thymidylyltransferase"/>
    <property type="match status" value="1"/>
</dbReference>
<dbReference type="Gene3D" id="3.90.550.10">
    <property type="entry name" value="Spore Coat Polysaccharide Biosynthesis Protein SpsA, Chain A"/>
    <property type="match status" value="1"/>
</dbReference>
<dbReference type="InterPro" id="IPR005907">
    <property type="entry name" value="G1P_thy_trans_s"/>
</dbReference>
<dbReference type="InterPro" id="IPR005835">
    <property type="entry name" value="NTP_transferase_dom"/>
</dbReference>
<dbReference type="InterPro" id="IPR029044">
    <property type="entry name" value="Nucleotide-diphossugar_trans"/>
</dbReference>
<dbReference type="NCBIfam" id="NF012024">
    <property type="entry name" value="PRK15480.1"/>
    <property type="match status" value="1"/>
</dbReference>
<dbReference type="NCBIfam" id="TIGR01207">
    <property type="entry name" value="rmlA"/>
    <property type="match status" value="1"/>
</dbReference>
<dbReference type="PANTHER" id="PTHR43532">
    <property type="entry name" value="GLUCOSE-1-PHOSPHATE THYMIDYLYLTRANSFERASE"/>
    <property type="match status" value="1"/>
</dbReference>
<dbReference type="PANTHER" id="PTHR43532:SF1">
    <property type="entry name" value="GLUCOSE-1-PHOSPHATE THYMIDYLYLTRANSFERASE 1"/>
    <property type="match status" value="1"/>
</dbReference>
<dbReference type="Pfam" id="PF00483">
    <property type="entry name" value="NTP_transferase"/>
    <property type="match status" value="1"/>
</dbReference>
<dbReference type="SUPFAM" id="SSF53448">
    <property type="entry name" value="Nucleotide-diphospho-sugar transferases"/>
    <property type="match status" value="1"/>
</dbReference>